<name>NU1M_BALMU</name>
<proteinExistence type="inferred from homology"/>
<dbReference type="EC" id="7.1.1.2" evidence="1"/>
<dbReference type="EMBL" id="X72204">
    <property type="protein sequence ID" value="CAA50995.1"/>
    <property type="molecule type" value="Genomic_DNA"/>
</dbReference>
<dbReference type="PIR" id="S41820">
    <property type="entry name" value="S41820"/>
</dbReference>
<dbReference type="RefSeq" id="NP_007056.1">
    <property type="nucleotide sequence ID" value="NC_001601.1"/>
</dbReference>
<dbReference type="SMR" id="P41296"/>
<dbReference type="GeneID" id="807743"/>
<dbReference type="KEGG" id="bmus:807743"/>
<dbReference type="CTD" id="4535"/>
<dbReference type="OrthoDB" id="531329at2759"/>
<dbReference type="Proteomes" id="UP000694857">
    <property type="component" value="Mitochondrion MT"/>
</dbReference>
<dbReference type="GO" id="GO:0005743">
    <property type="term" value="C:mitochondrial inner membrane"/>
    <property type="evidence" value="ECO:0000250"/>
    <property type="project" value="UniProtKB"/>
</dbReference>
<dbReference type="GO" id="GO:0008137">
    <property type="term" value="F:NADH dehydrogenase (ubiquinone) activity"/>
    <property type="evidence" value="ECO:0000250"/>
    <property type="project" value="UniProtKB"/>
</dbReference>
<dbReference type="GO" id="GO:0006120">
    <property type="term" value="P:mitochondrial electron transport, NADH to ubiquinone"/>
    <property type="evidence" value="ECO:0000250"/>
    <property type="project" value="UniProtKB"/>
</dbReference>
<dbReference type="GO" id="GO:0032981">
    <property type="term" value="P:mitochondrial respiratory chain complex I assembly"/>
    <property type="evidence" value="ECO:0000250"/>
    <property type="project" value="UniProtKB"/>
</dbReference>
<dbReference type="HAMAP" id="MF_01350">
    <property type="entry name" value="NDH1_NuoH"/>
    <property type="match status" value="1"/>
</dbReference>
<dbReference type="InterPro" id="IPR001694">
    <property type="entry name" value="NADH_UbQ_OxRdtase_su1/FPO"/>
</dbReference>
<dbReference type="InterPro" id="IPR018086">
    <property type="entry name" value="NADH_UbQ_OxRdtase_su1_CS"/>
</dbReference>
<dbReference type="PANTHER" id="PTHR11432">
    <property type="entry name" value="NADH DEHYDROGENASE SUBUNIT 1"/>
    <property type="match status" value="1"/>
</dbReference>
<dbReference type="PANTHER" id="PTHR11432:SF3">
    <property type="entry name" value="NADH-UBIQUINONE OXIDOREDUCTASE CHAIN 1"/>
    <property type="match status" value="1"/>
</dbReference>
<dbReference type="Pfam" id="PF00146">
    <property type="entry name" value="NADHdh"/>
    <property type="match status" value="1"/>
</dbReference>
<dbReference type="PROSITE" id="PS00667">
    <property type="entry name" value="COMPLEX1_ND1_1"/>
    <property type="match status" value="1"/>
</dbReference>
<dbReference type="PROSITE" id="PS00668">
    <property type="entry name" value="COMPLEX1_ND1_2"/>
    <property type="match status" value="1"/>
</dbReference>
<protein>
    <recommendedName>
        <fullName>NADH-ubiquinone oxidoreductase chain 1</fullName>
        <ecNumber evidence="1">7.1.1.2</ecNumber>
    </recommendedName>
    <alternativeName>
        <fullName>NADH dehydrogenase subunit 1</fullName>
    </alternativeName>
</protein>
<organism>
    <name type="scientific">Balaenoptera musculus</name>
    <name type="common">Blue whale</name>
    <dbReference type="NCBI Taxonomy" id="9771"/>
    <lineage>
        <taxon>Eukaryota</taxon>
        <taxon>Metazoa</taxon>
        <taxon>Chordata</taxon>
        <taxon>Craniata</taxon>
        <taxon>Vertebrata</taxon>
        <taxon>Euteleostomi</taxon>
        <taxon>Mammalia</taxon>
        <taxon>Eutheria</taxon>
        <taxon>Laurasiatheria</taxon>
        <taxon>Artiodactyla</taxon>
        <taxon>Whippomorpha</taxon>
        <taxon>Cetacea</taxon>
        <taxon>Mysticeti</taxon>
        <taxon>Balaenopteridae</taxon>
        <taxon>Balaenoptera</taxon>
    </lineage>
</organism>
<feature type="chain" id="PRO_0000117352" description="NADH-ubiquinone oxidoreductase chain 1">
    <location>
        <begin position="1"/>
        <end position="318"/>
    </location>
</feature>
<feature type="transmembrane region" description="Helical" evidence="3">
    <location>
        <begin position="2"/>
        <end position="22"/>
    </location>
</feature>
<feature type="transmembrane region" description="Helical" evidence="3">
    <location>
        <begin position="70"/>
        <end position="90"/>
    </location>
</feature>
<feature type="transmembrane region" description="Helical" evidence="3">
    <location>
        <begin position="100"/>
        <end position="120"/>
    </location>
</feature>
<feature type="transmembrane region" description="Helical" evidence="3">
    <location>
        <begin position="136"/>
        <end position="156"/>
    </location>
</feature>
<feature type="transmembrane region" description="Helical" evidence="3">
    <location>
        <begin position="172"/>
        <end position="192"/>
    </location>
</feature>
<feature type="transmembrane region" description="Helical" evidence="3">
    <location>
        <begin position="222"/>
        <end position="242"/>
    </location>
</feature>
<feature type="transmembrane region" description="Helical" evidence="3">
    <location>
        <begin position="253"/>
        <end position="273"/>
    </location>
</feature>
<feature type="transmembrane region" description="Helical" evidence="3">
    <location>
        <begin position="294"/>
        <end position="314"/>
    </location>
</feature>
<gene>
    <name type="primary">MT-ND1</name>
    <name type="synonym">MTND1</name>
    <name type="synonym">NADH1</name>
    <name type="synonym">ND1</name>
</gene>
<keyword id="KW-0249">Electron transport</keyword>
<keyword id="KW-0472">Membrane</keyword>
<keyword id="KW-0496">Mitochondrion</keyword>
<keyword id="KW-0999">Mitochondrion inner membrane</keyword>
<keyword id="KW-0520">NAD</keyword>
<keyword id="KW-1185">Reference proteome</keyword>
<keyword id="KW-0679">Respiratory chain</keyword>
<keyword id="KW-1278">Translocase</keyword>
<keyword id="KW-0812">Transmembrane</keyword>
<keyword id="KW-1133">Transmembrane helix</keyword>
<keyword id="KW-0813">Transport</keyword>
<keyword id="KW-0830">Ubiquinone</keyword>
<comment type="function">
    <text evidence="1">Core subunit of the mitochondrial membrane respiratory chain NADH dehydrogenase (Complex I) which catalyzes electron transfer from NADH through the respiratory chain, using ubiquinone as an electron acceptor. Essential for the catalytic activity and assembly of complex I.</text>
</comment>
<comment type="catalytic activity">
    <reaction evidence="1">
        <text>a ubiquinone + NADH + 5 H(+)(in) = a ubiquinol + NAD(+) + 4 H(+)(out)</text>
        <dbReference type="Rhea" id="RHEA:29091"/>
        <dbReference type="Rhea" id="RHEA-COMP:9565"/>
        <dbReference type="Rhea" id="RHEA-COMP:9566"/>
        <dbReference type="ChEBI" id="CHEBI:15378"/>
        <dbReference type="ChEBI" id="CHEBI:16389"/>
        <dbReference type="ChEBI" id="CHEBI:17976"/>
        <dbReference type="ChEBI" id="CHEBI:57540"/>
        <dbReference type="ChEBI" id="CHEBI:57945"/>
        <dbReference type="EC" id="7.1.1.2"/>
    </reaction>
</comment>
<comment type="subunit">
    <text evidence="2">Core subunit of respiratory chain NADH dehydrogenase (Complex I) which is composed of 45 different subunits.</text>
</comment>
<comment type="subcellular location">
    <subcellularLocation>
        <location evidence="2">Mitochondrion inner membrane</location>
        <topology evidence="3">Multi-pass membrane protein</topology>
    </subcellularLocation>
</comment>
<comment type="similarity">
    <text evidence="4">Belongs to the complex I subunit 1 family.</text>
</comment>
<sequence>MFMINILTLILPILLAVAFLTLVERKILGYMQFRKGPNIVGPHGLLQPFADAIKLFTKEPLRPATSSTTMFIIAPVLALALALTMWSPLPMPYPLINMNLGVLFMLAMSSLAVYSILWSGWASNSKYALIGALRAVAQTISYEVTLAIILLSVLLMNGSYTLSTLATTQEQLWLLFPSWPLAMMWFISTLAETNRAPFDLTEGESELVSGFNVEYAAGPFALFFLAEYANIIMMNMFTAILFLGTFHNPCNPELYTTNLIIKTLLLTMSFLWIRASYPRFRYDQLMHLLWKNFLPLTLALCMWHISLPIMTASIPPQT</sequence>
<evidence type="ECO:0000250" key="1">
    <source>
        <dbReference type="UniProtKB" id="P03886"/>
    </source>
</evidence>
<evidence type="ECO:0000250" key="2">
    <source>
        <dbReference type="UniProtKB" id="P03887"/>
    </source>
</evidence>
<evidence type="ECO:0000255" key="3"/>
<evidence type="ECO:0000305" key="4"/>
<geneLocation type="mitochondrion"/>
<accession>P41296</accession>
<reference key="1">
    <citation type="journal article" date="1993" name="J. Mol. Evol.">
        <title>Comparison between the complete mtDNA sequences of the blue and the fin whale, two species that can hybridize in nature.</title>
        <authorList>
            <person name="Arnason U."/>
            <person name="Gullberg A."/>
        </authorList>
    </citation>
    <scope>NUCLEOTIDE SEQUENCE [GENOMIC DNA]</scope>
</reference>